<accession>Q54Q37</accession>
<keyword id="KW-1185">Reference proteome</keyword>
<organism>
    <name type="scientific">Dictyostelium discoideum</name>
    <name type="common">Social amoeba</name>
    <dbReference type="NCBI Taxonomy" id="44689"/>
    <lineage>
        <taxon>Eukaryota</taxon>
        <taxon>Amoebozoa</taxon>
        <taxon>Evosea</taxon>
        <taxon>Eumycetozoa</taxon>
        <taxon>Dictyostelia</taxon>
        <taxon>Dictyosteliales</taxon>
        <taxon>Dictyosteliaceae</taxon>
        <taxon>Dictyostelium</taxon>
    </lineage>
</organism>
<protein>
    <recommendedName>
        <fullName>Protein sigN172</fullName>
    </recommendedName>
    <alternativeName>
        <fullName>SrfA-induced gene N-like protein 172</fullName>
    </alternativeName>
</protein>
<reference key="1">
    <citation type="journal article" date="2005" name="Nature">
        <title>The genome of the social amoeba Dictyostelium discoideum.</title>
        <authorList>
            <person name="Eichinger L."/>
            <person name="Pachebat J.A."/>
            <person name="Gloeckner G."/>
            <person name="Rajandream M.A."/>
            <person name="Sucgang R."/>
            <person name="Berriman M."/>
            <person name="Song J."/>
            <person name="Olsen R."/>
            <person name="Szafranski K."/>
            <person name="Xu Q."/>
            <person name="Tunggal B."/>
            <person name="Kummerfeld S."/>
            <person name="Madera M."/>
            <person name="Konfortov B.A."/>
            <person name="Rivero F."/>
            <person name="Bankier A.T."/>
            <person name="Lehmann R."/>
            <person name="Hamlin N."/>
            <person name="Davies R."/>
            <person name="Gaudet P."/>
            <person name="Fey P."/>
            <person name="Pilcher K."/>
            <person name="Chen G."/>
            <person name="Saunders D."/>
            <person name="Sodergren E.J."/>
            <person name="Davis P."/>
            <person name="Kerhornou A."/>
            <person name="Nie X."/>
            <person name="Hall N."/>
            <person name="Anjard C."/>
            <person name="Hemphill L."/>
            <person name="Bason N."/>
            <person name="Farbrother P."/>
            <person name="Desany B."/>
            <person name="Just E."/>
            <person name="Morio T."/>
            <person name="Rost R."/>
            <person name="Churcher C.M."/>
            <person name="Cooper J."/>
            <person name="Haydock S."/>
            <person name="van Driessche N."/>
            <person name="Cronin A."/>
            <person name="Goodhead I."/>
            <person name="Muzny D.M."/>
            <person name="Mourier T."/>
            <person name="Pain A."/>
            <person name="Lu M."/>
            <person name="Harper D."/>
            <person name="Lindsay R."/>
            <person name="Hauser H."/>
            <person name="James K.D."/>
            <person name="Quiles M."/>
            <person name="Madan Babu M."/>
            <person name="Saito T."/>
            <person name="Buchrieser C."/>
            <person name="Wardroper A."/>
            <person name="Felder M."/>
            <person name="Thangavelu M."/>
            <person name="Johnson D."/>
            <person name="Knights A."/>
            <person name="Loulseged H."/>
            <person name="Mungall K.L."/>
            <person name="Oliver K."/>
            <person name="Price C."/>
            <person name="Quail M.A."/>
            <person name="Urushihara H."/>
            <person name="Hernandez J."/>
            <person name="Rabbinowitsch E."/>
            <person name="Steffen D."/>
            <person name="Sanders M."/>
            <person name="Ma J."/>
            <person name="Kohara Y."/>
            <person name="Sharp S."/>
            <person name="Simmonds M.N."/>
            <person name="Spiegler S."/>
            <person name="Tivey A."/>
            <person name="Sugano S."/>
            <person name="White B."/>
            <person name="Walker D."/>
            <person name="Woodward J.R."/>
            <person name="Winckler T."/>
            <person name="Tanaka Y."/>
            <person name="Shaulsky G."/>
            <person name="Schleicher M."/>
            <person name="Weinstock G.M."/>
            <person name="Rosenthal A."/>
            <person name="Cox E.C."/>
            <person name="Chisholm R.L."/>
            <person name="Gibbs R.A."/>
            <person name="Loomis W.F."/>
            <person name="Platzer M."/>
            <person name="Kay R.R."/>
            <person name="Williams J.G."/>
            <person name="Dear P.H."/>
            <person name="Noegel A.A."/>
            <person name="Barrell B.G."/>
            <person name="Kuspa A."/>
        </authorList>
    </citation>
    <scope>NUCLEOTIDE SEQUENCE [LARGE SCALE GENOMIC DNA]</scope>
    <source>
        <strain>AX4</strain>
    </source>
</reference>
<reference key="2">
    <citation type="journal article" date="2008" name="BMC Microbiol.">
        <title>Structural and functional studies of a family of Dictyostelium discoideum developmentally regulated, prestalk genes coding for small proteins.</title>
        <authorList>
            <person name="Vicente J.J."/>
            <person name="Galardi-Castilla M."/>
            <person name="Escalante R."/>
            <person name="Sastre L."/>
        </authorList>
    </citation>
    <scope>IDENTIFICATION</scope>
</reference>
<name>SI172_DICDI</name>
<dbReference type="EMBL" id="AAFI02000063">
    <property type="protein sequence ID" value="EAL65422.1"/>
    <property type="molecule type" value="Genomic_DNA"/>
</dbReference>
<dbReference type="RefSeq" id="XP_638760.1">
    <property type="nucleotide sequence ID" value="XM_633668.1"/>
</dbReference>
<dbReference type="PaxDb" id="44689-DDB0266560"/>
<dbReference type="EnsemblProtists" id="EAL65422">
    <property type="protein sequence ID" value="EAL65422"/>
    <property type="gene ID" value="DDB_G0284163"/>
</dbReference>
<dbReference type="GeneID" id="8624431"/>
<dbReference type="KEGG" id="ddi:DDB_G0284163"/>
<dbReference type="dictyBase" id="DDB_G0284163"/>
<dbReference type="VEuPathDB" id="AmoebaDB:DDB_G0284163"/>
<dbReference type="HOGENOM" id="CLU_2890470_0_0_1"/>
<dbReference type="InParanoid" id="Q54Q37"/>
<dbReference type="PRO" id="PR:Q54Q37"/>
<dbReference type="Proteomes" id="UP000002195">
    <property type="component" value="Chromosome 4"/>
</dbReference>
<proteinExistence type="predicted"/>
<gene>
    <name type="ORF">DDB_G0284163</name>
</gene>
<sequence length="63" mass="6224">MTIFDSIALISKSSKSGLTSGNTTSKLNGITVGGNNVSSVNCGGCGGYTNNEPSLYGGNCGCN</sequence>
<feature type="chain" id="PRO_0000394030" description="Protein sigN172">
    <location>
        <begin position="1"/>
        <end position="63"/>
    </location>
</feature>